<proteinExistence type="evidence at protein level"/>
<reference key="1">
    <citation type="journal article" date="1996" name="J. Bacteriol.">
        <title>Escherichia coli thymidylate kinase: molecular cloning, nucleotide sequence, and genetic organization of the corresponding tmk locus.</title>
        <authorList>
            <person name="Reynes J.-P."/>
            <person name="Tiraby M."/>
            <person name="Baron M."/>
            <person name="Drocourt D."/>
            <person name="Tiraby G."/>
        </authorList>
    </citation>
    <scope>NUCLEOTIDE SEQUENCE [GENOMIC DNA]</scope>
    <scope>CATALYTIC ACTIVITY</scope>
    <scope>FUNCTION</scope>
    <source>
        <strain>K12 / W3110 / ATCC 27325 / DSM 5911</strain>
    </source>
</reference>
<reference key="2">
    <citation type="journal article" date="1996" name="DNA Res.">
        <title>A 718-kb DNA sequence of the Escherichia coli K-12 genome corresponding to the 12.7-28.0 min region on the linkage map.</title>
        <authorList>
            <person name="Oshima T."/>
            <person name="Aiba H."/>
            <person name="Baba T."/>
            <person name="Fujita K."/>
            <person name="Hayashi K."/>
            <person name="Honjo A."/>
            <person name="Ikemoto K."/>
            <person name="Inada T."/>
            <person name="Itoh T."/>
            <person name="Kajihara M."/>
            <person name="Kanai K."/>
            <person name="Kashimoto K."/>
            <person name="Kimura S."/>
            <person name="Kitagawa M."/>
            <person name="Makino K."/>
            <person name="Masuda S."/>
            <person name="Miki T."/>
            <person name="Mizobuchi K."/>
            <person name="Mori H."/>
            <person name="Motomura K."/>
            <person name="Nakamura Y."/>
            <person name="Nashimoto H."/>
            <person name="Nishio Y."/>
            <person name="Saito N."/>
            <person name="Sampei G."/>
            <person name="Seki Y."/>
            <person name="Tagami H."/>
            <person name="Takemoto K."/>
            <person name="Wada C."/>
            <person name="Yamamoto Y."/>
            <person name="Yano M."/>
            <person name="Horiuchi T."/>
        </authorList>
    </citation>
    <scope>NUCLEOTIDE SEQUENCE [LARGE SCALE GENOMIC DNA]</scope>
    <source>
        <strain>K12 / W3110 / ATCC 27325 / DSM 5911</strain>
    </source>
</reference>
<reference key="3">
    <citation type="journal article" date="1997" name="Science">
        <title>The complete genome sequence of Escherichia coli K-12.</title>
        <authorList>
            <person name="Blattner F.R."/>
            <person name="Plunkett G. III"/>
            <person name="Bloch C.A."/>
            <person name="Perna N.T."/>
            <person name="Burland V."/>
            <person name="Riley M."/>
            <person name="Collado-Vides J."/>
            <person name="Glasner J.D."/>
            <person name="Rode C.K."/>
            <person name="Mayhew G.F."/>
            <person name="Gregor J."/>
            <person name="Davis N.W."/>
            <person name="Kirkpatrick H.A."/>
            <person name="Goeden M.A."/>
            <person name="Rose D.J."/>
            <person name="Mau B."/>
            <person name="Shao Y."/>
        </authorList>
    </citation>
    <scope>NUCLEOTIDE SEQUENCE [LARGE SCALE GENOMIC DNA]</scope>
    <source>
        <strain>K12 / MG1655 / ATCC 47076</strain>
    </source>
</reference>
<reference key="4">
    <citation type="journal article" date="2006" name="Mol. Syst. Biol.">
        <title>Highly accurate genome sequences of Escherichia coli K-12 strains MG1655 and W3110.</title>
        <authorList>
            <person name="Hayashi K."/>
            <person name="Morooka N."/>
            <person name="Yamamoto Y."/>
            <person name="Fujita K."/>
            <person name="Isono K."/>
            <person name="Choi S."/>
            <person name="Ohtsubo E."/>
            <person name="Baba T."/>
            <person name="Wanner B.L."/>
            <person name="Mori H."/>
            <person name="Horiuchi T."/>
        </authorList>
    </citation>
    <scope>NUCLEOTIDE SEQUENCE [LARGE SCALE GENOMIC DNA]</scope>
    <source>
        <strain>K12 / W3110 / ATCC 27325 / DSM 5911</strain>
    </source>
</reference>
<reference key="5">
    <citation type="journal article" date="1993" name="J. Bacteriol.">
        <title>Identification, isolation, and characterization of the structural gene encoding the delta' subunit of Escherichia coli DNA polymerase III holoenzyme.</title>
        <authorList>
            <person name="Carter J.R."/>
            <person name="Franden M.A."/>
            <person name="Aebersold R.H."/>
            <person name="McHenry C.S."/>
        </authorList>
    </citation>
    <scope>NUCLEOTIDE SEQUENCE [GENOMIC DNA] OF 85-213</scope>
    <source>
        <strain>K12 / MG1655 / ATCC 47076</strain>
    </source>
</reference>
<reference key="6">
    <citation type="journal article" date="1993" name="J. Biol. Chem.">
        <title>DNA polymerase III accessory proteins. I. holA and holB encoding delta and delta'.</title>
        <authorList>
            <person name="Dong Z."/>
            <person name="Onrust R."/>
            <person name="Skangalis M."/>
            <person name="O'Donnell M."/>
        </authorList>
    </citation>
    <scope>NUCLEOTIDE SEQUENCE [GENOMIC DNA] OF 162-213</scope>
    <source>
        <strain>K12</strain>
    </source>
</reference>
<reference key="7">
    <citation type="journal article" date="2001" name="Protein Sci.">
        <title>Thymidylate kinase of Mycobacterium tuberculosis: a chimera sharing properties common to eukaryotic and bacterial enzymes.</title>
        <authorList>
            <person name="Munier-Lehmann H."/>
            <person name="Chaffotte A."/>
            <person name="Pochet S."/>
            <person name="Labesse G."/>
        </authorList>
    </citation>
    <scope>BIOPHYSICOCHEMICAL PROPERTIES</scope>
</reference>
<reference key="8">
    <citation type="journal article" date="1998" name="Proc. Natl. Acad. Sci. U.S.A.">
        <title>Structural basis for efficient phosphorylation of 3'-azidothymidine monophosphate by Escherichia coli thymidylate kinase.</title>
        <authorList>
            <person name="Lavie A."/>
            <person name="Ostermann N."/>
            <person name="Brundiers R."/>
            <person name="Goody R.S."/>
            <person name="Reinstein J."/>
            <person name="Konrad M."/>
            <person name="Schlichting I."/>
        </authorList>
    </citation>
    <scope>X-RAY CRYSTALLOGRAPHY (1.98 ANGSTROMS) OF COMPLEXES WITH THE BISUBSTRATE INHIBITORS TP5A AND AZT-P5A</scope>
</reference>
<accession>P0A720</accession>
<accession>P37345</accession>
<name>KTHY_ECOLI</name>
<keyword id="KW-0002">3D-structure</keyword>
<keyword id="KW-0067">ATP-binding</keyword>
<keyword id="KW-0418">Kinase</keyword>
<keyword id="KW-0545">Nucleotide biosynthesis</keyword>
<keyword id="KW-0547">Nucleotide-binding</keyword>
<keyword id="KW-1185">Reference proteome</keyword>
<keyword id="KW-0808">Transferase</keyword>
<evidence type="ECO:0000269" key="1">
    <source>
    </source>
</evidence>
<evidence type="ECO:0000269" key="2">
    <source>
    </source>
</evidence>
<evidence type="ECO:0000269" key="3">
    <source>
    </source>
</evidence>
<evidence type="ECO:0000305" key="4"/>
<evidence type="ECO:0007829" key="5">
    <source>
        <dbReference type="PDB" id="4TMK"/>
    </source>
</evidence>
<dbReference type="EC" id="2.7.4.9" evidence="2"/>
<dbReference type="EMBL" id="U41456">
    <property type="protein sequence ID" value="AAB06878.1"/>
    <property type="molecule type" value="Genomic_DNA"/>
</dbReference>
<dbReference type="EMBL" id="U00096">
    <property type="protein sequence ID" value="AAC74182.1"/>
    <property type="molecule type" value="Genomic_DNA"/>
</dbReference>
<dbReference type="EMBL" id="AP009048">
    <property type="protein sequence ID" value="BAA35905.1"/>
    <property type="molecule type" value="Genomic_DNA"/>
</dbReference>
<dbReference type="EMBL" id="L01483">
    <property type="status" value="NOT_ANNOTATED_CDS"/>
    <property type="molecule type" value="Genomic_DNA"/>
</dbReference>
<dbReference type="EMBL" id="L04577">
    <property type="status" value="NOT_ANNOTATED_CDS"/>
    <property type="molecule type" value="Genomic_DNA"/>
</dbReference>
<dbReference type="PIR" id="JC6006">
    <property type="entry name" value="G64853"/>
</dbReference>
<dbReference type="RefSeq" id="NP_415616.1">
    <property type="nucleotide sequence ID" value="NC_000913.3"/>
</dbReference>
<dbReference type="RefSeq" id="WP_001257000.1">
    <property type="nucleotide sequence ID" value="NZ_STEB01000016.1"/>
</dbReference>
<dbReference type="PDB" id="1E9F">
    <property type="method" value="X-ray"/>
    <property type="resolution" value="1.90 A"/>
    <property type="chains" value="A=151-156"/>
</dbReference>
<dbReference type="PDB" id="4TMK">
    <property type="method" value="X-ray"/>
    <property type="resolution" value="1.98 A"/>
    <property type="chains" value="A=1-213"/>
</dbReference>
<dbReference type="PDB" id="5TMP">
    <property type="method" value="X-ray"/>
    <property type="resolution" value="1.98 A"/>
    <property type="chains" value="A=1-213"/>
</dbReference>
<dbReference type="PDBsum" id="1E9F"/>
<dbReference type="PDBsum" id="4TMK"/>
<dbReference type="PDBsum" id="5TMP"/>
<dbReference type="SMR" id="P0A720"/>
<dbReference type="BioGRID" id="4263411">
    <property type="interactions" value="47"/>
</dbReference>
<dbReference type="DIP" id="DIP-48110N"/>
<dbReference type="FunCoup" id="P0A720">
    <property type="interactions" value="768"/>
</dbReference>
<dbReference type="IntAct" id="P0A720">
    <property type="interactions" value="8"/>
</dbReference>
<dbReference type="STRING" id="511145.b1098"/>
<dbReference type="ChEMBL" id="CHEMBL3309028"/>
<dbReference type="jPOST" id="P0A720"/>
<dbReference type="PaxDb" id="511145-b1098"/>
<dbReference type="EnsemblBacteria" id="AAC74182">
    <property type="protein sequence ID" value="AAC74182"/>
    <property type="gene ID" value="b1098"/>
</dbReference>
<dbReference type="GeneID" id="93776310"/>
<dbReference type="GeneID" id="945663"/>
<dbReference type="KEGG" id="ecj:JW1084"/>
<dbReference type="KEGG" id="eco:b1098"/>
<dbReference type="KEGG" id="ecoc:C3026_06635"/>
<dbReference type="PATRIC" id="fig|1411691.4.peg.1170"/>
<dbReference type="EchoBASE" id="EB2208"/>
<dbReference type="eggNOG" id="COG0125">
    <property type="taxonomic scope" value="Bacteria"/>
</dbReference>
<dbReference type="HOGENOM" id="CLU_049131_0_1_6"/>
<dbReference type="InParanoid" id="P0A720"/>
<dbReference type="OMA" id="FLYTADH"/>
<dbReference type="OrthoDB" id="9774907at2"/>
<dbReference type="PhylomeDB" id="P0A720"/>
<dbReference type="BioCyc" id="EcoCyc:DTMPKI-MONOMER"/>
<dbReference type="BioCyc" id="MetaCyc:DTMPKI-MONOMER"/>
<dbReference type="SABIO-RK" id="P0A720"/>
<dbReference type="UniPathway" id="UPA00575"/>
<dbReference type="EvolutionaryTrace" id="P0A720"/>
<dbReference type="PRO" id="PR:P0A720"/>
<dbReference type="Proteomes" id="UP000000625">
    <property type="component" value="Chromosome"/>
</dbReference>
<dbReference type="GO" id="GO:0005737">
    <property type="term" value="C:cytoplasm"/>
    <property type="evidence" value="ECO:0000314"/>
    <property type="project" value="EcoliWiki"/>
</dbReference>
<dbReference type="GO" id="GO:0005829">
    <property type="term" value="C:cytosol"/>
    <property type="evidence" value="ECO:0000314"/>
    <property type="project" value="EcoCyc"/>
</dbReference>
<dbReference type="GO" id="GO:0005524">
    <property type="term" value="F:ATP binding"/>
    <property type="evidence" value="ECO:0007669"/>
    <property type="project" value="UniProtKB-UniRule"/>
</dbReference>
<dbReference type="GO" id="GO:0004798">
    <property type="term" value="F:dTMP kinase activity"/>
    <property type="evidence" value="ECO:0000314"/>
    <property type="project" value="EcoCyc"/>
</dbReference>
<dbReference type="GO" id="GO:0042803">
    <property type="term" value="F:protein homodimerization activity"/>
    <property type="evidence" value="ECO:0000314"/>
    <property type="project" value="EcoCyc"/>
</dbReference>
<dbReference type="GO" id="GO:0006233">
    <property type="term" value="P:dTDP biosynthetic process"/>
    <property type="evidence" value="ECO:0000314"/>
    <property type="project" value="EcoliWiki"/>
</dbReference>
<dbReference type="GO" id="GO:0006235">
    <property type="term" value="P:dTTP biosynthetic process"/>
    <property type="evidence" value="ECO:0000314"/>
    <property type="project" value="EcoliWiki"/>
</dbReference>
<dbReference type="GO" id="GO:0006227">
    <property type="term" value="P:dUDP biosynthetic process"/>
    <property type="evidence" value="ECO:0000318"/>
    <property type="project" value="GO_Central"/>
</dbReference>
<dbReference type="GO" id="GO:0015949">
    <property type="term" value="P:nucleobase-containing small molecule interconversion"/>
    <property type="evidence" value="ECO:0000314"/>
    <property type="project" value="EcoliWiki"/>
</dbReference>
<dbReference type="CDD" id="cd01672">
    <property type="entry name" value="TMPK"/>
    <property type="match status" value="1"/>
</dbReference>
<dbReference type="FunFam" id="3.40.50.300:FF:000321">
    <property type="entry name" value="Thymidylate kinase"/>
    <property type="match status" value="1"/>
</dbReference>
<dbReference type="Gene3D" id="3.40.50.300">
    <property type="entry name" value="P-loop containing nucleotide triphosphate hydrolases"/>
    <property type="match status" value="1"/>
</dbReference>
<dbReference type="HAMAP" id="MF_00165">
    <property type="entry name" value="Thymidylate_kinase"/>
    <property type="match status" value="1"/>
</dbReference>
<dbReference type="InterPro" id="IPR027417">
    <property type="entry name" value="P-loop_NTPase"/>
</dbReference>
<dbReference type="InterPro" id="IPR039430">
    <property type="entry name" value="Thymidylate_kin-like_dom"/>
</dbReference>
<dbReference type="InterPro" id="IPR018095">
    <property type="entry name" value="Thymidylate_kin_CS"/>
</dbReference>
<dbReference type="InterPro" id="IPR018094">
    <property type="entry name" value="Thymidylate_kinase"/>
</dbReference>
<dbReference type="NCBIfam" id="TIGR00041">
    <property type="entry name" value="DTMP_kinase"/>
    <property type="match status" value="1"/>
</dbReference>
<dbReference type="PANTHER" id="PTHR10344">
    <property type="entry name" value="THYMIDYLATE KINASE"/>
    <property type="match status" value="1"/>
</dbReference>
<dbReference type="PANTHER" id="PTHR10344:SF4">
    <property type="entry name" value="UMP-CMP KINASE 2, MITOCHONDRIAL"/>
    <property type="match status" value="1"/>
</dbReference>
<dbReference type="Pfam" id="PF02223">
    <property type="entry name" value="Thymidylate_kin"/>
    <property type="match status" value="1"/>
</dbReference>
<dbReference type="SUPFAM" id="SSF52540">
    <property type="entry name" value="P-loop containing nucleoside triphosphate hydrolases"/>
    <property type="match status" value="1"/>
</dbReference>
<dbReference type="PROSITE" id="PS01331">
    <property type="entry name" value="THYMIDYLATE_KINASE"/>
    <property type="match status" value="1"/>
</dbReference>
<feature type="chain" id="PRO_0000155269" description="Thymidylate kinase">
    <location>
        <begin position="1"/>
        <end position="213"/>
    </location>
</feature>
<feature type="region of interest" description="LID">
    <location>
        <begin position="147"/>
        <end position="159"/>
    </location>
</feature>
<feature type="binding site">
    <location>
        <begin position="10"/>
        <end position="17"/>
    </location>
    <ligand>
        <name>ATP</name>
        <dbReference type="ChEBI" id="CHEBI:30616"/>
    </ligand>
</feature>
<feature type="binding site" evidence="3">
    <location>
        <position position="12"/>
    </location>
    <ligand>
        <name>dTMP</name>
        <dbReference type="ChEBI" id="CHEBI:63528"/>
    </ligand>
</feature>
<feature type="binding site">
    <location>
        <position position="74"/>
    </location>
    <ligand>
        <name>dTMP</name>
        <dbReference type="ChEBI" id="CHEBI:63528"/>
    </ligand>
</feature>
<feature type="binding site">
    <location>
        <position position="78"/>
    </location>
    <ligand>
        <name>dTMP</name>
        <dbReference type="ChEBI" id="CHEBI:63528"/>
    </ligand>
</feature>
<feature type="binding site">
    <location>
        <position position="100"/>
    </location>
    <ligand>
        <name>dTMP</name>
        <dbReference type="ChEBI" id="CHEBI:63528"/>
    </ligand>
</feature>
<feature type="binding site">
    <location>
        <position position="105"/>
    </location>
    <ligand>
        <name>dTMP</name>
        <dbReference type="ChEBI" id="CHEBI:63528"/>
    </ligand>
</feature>
<feature type="binding site">
    <location>
        <position position="108"/>
    </location>
    <ligand>
        <name>dTMP</name>
        <dbReference type="ChEBI" id="CHEBI:63528"/>
    </ligand>
</feature>
<feature type="binding site">
    <location>
        <position position="109"/>
    </location>
    <ligand>
        <name>dTMP</name>
        <dbReference type="ChEBI" id="CHEBI:63528"/>
    </ligand>
</feature>
<feature type="site" description="Transition state stabilizer" evidence="3">
    <location>
        <position position="153"/>
    </location>
</feature>
<feature type="sequence conflict" description="In Ref. 5." evidence="4" ref="5">
    <original>G</original>
    <variation>A</variation>
    <location>
        <position position="112"/>
    </location>
</feature>
<feature type="sequence conflict" description="In Ref. 5." evidence="4" ref="5">
    <original>T</original>
    <variation>N</variation>
    <location>
        <position position="122"/>
    </location>
</feature>
<feature type="strand" evidence="5">
    <location>
        <begin position="5"/>
        <end position="10"/>
    </location>
</feature>
<feature type="helix" evidence="5">
    <location>
        <begin position="16"/>
        <end position="29"/>
    </location>
</feature>
<feature type="strand" evidence="5">
    <location>
        <begin position="35"/>
        <end position="41"/>
    </location>
</feature>
<feature type="helix" evidence="5">
    <location>
        <begin position="45"/>
        <end position="55"/>
    </location>
</feature>
<feature type="turn" evidence="5">
    <location>
        <begin position="57"/>
        <end position="62"/>
    </location>
</feature>
<feature type="helix" evidence="5">
    <location>
        <begin position="67"/>
        <end position="84"/>
    </location>
</feature>
<feature type="helix" evidence="5">
    <location>
        <begin position="86"/>
        <end position="91"/>
    </location>
</feature>
<feature type="strand" evidence="5">
    <location>
        <begin position="95"/>
        <end position="99"/>
    </location>
</feature>
<feature type="helix" evidence="5">
    <location>
        <begin position="102"/>
        <end position="108"/>
    </location>
</feature>
<feature type="turn" evidence="5">
    <location>
        <begin position="109"/>
        <end position="113"/>
    </location>
</feature>
<feature type="helix" evidence="5">
    <location>
        <begin position="117"/>
        <end position="128"/>
    </location>
</feature>
<feature type="strand" evidence="5">
    <location>
        <begin position="134"/>
        <end position="140"/>
    </location>
</feature>
<feature type="helix" evidence="5">
    <location>
        <begin position="143"/>
        <end position="153"/>
    </location>
</feature>
<feature type="turn" evidence="5">
    <location>
        <begin position="158"/>
        <end position="161"/>
    </location>
</feature>
<feature type="helix" evidence="5">
    <location>
        <begin position="164"/>
        <end position="179"/>
    </location>
</feature>
<feature type="strand" evidence="5">
    <location>
        <begin position="184"/>
        <end position="188"/>
    </location>
</feature>
<feature type="helix" evidence="5">
    <location>
        <begin position="193"/>
        <end position="209"/>
    </location>
</feature>
<protein>
    <recommendedName>
        <fullName>Thymidylate kinase</fullName>
        <ecNumber evidence="2">2.7.4.9</ecNumber>
    </recommendedName>
    <alternativeName>
        <fullName>Thymidine monophosphate kinase</fullName>
    </alternativeName>
    <alternativeName>
        <fullName>dTMP kinase</fullName>
        <shortName>TMPK</shortName>
    </alternativeName>
</protein>
<sequence>MRSKYIVIEGLEGAGKTTARNVVVETLEQLGIRDMVFTREPGGTQLAEKLRSLVLDIKSVGDEVITDKAEVLMFYAARVQLVETVIKPALANGTWVIGDRHDLSTQAYQGGGRGIDQHMLATLRDAVLGDFRPDLTLYLDVTPEVGLKRARARGELDRIEQESFDFFNRTRARYLELAAQDKSIHTIDATQPLEAVMDAIRTTVTHWVKELDA</sequence>
<organism>
    <name type="scientific">Escherichia coli (strain K12)</name>
    <dbReference type="NCBI Taxonomy" id="83333"/>
    <lineage>
        <taxon>Bacteria</taxon>
        <taxon>Pseudomonadati</taxon>
        <taxon>Pseudomonadota</taxon>
        <taxon>Gammaproteobacteria</taxon>
        <taxon>Enterobacterales</taxon>
        <taxon>Enterobacteriaceae</taxon>
        <taxon>Escherichia</taxon>
    </lineage>
</organism>
<comment type="function">
    <text evidence="2">Catalyzes the reversible phosphorylation of deoxythymidine monophosphate (dTMP) to deoxythymidine diphosphate (dTDP), using ATP as its preferred phosphoryl donor (PubMed:8631667). Situated at the junction of both de novo and salvage pathways of deoxythymidine triphosphate (dTTP) synthesis, is essential for DNA synthesis and cellular growth.</text>
</comment>
<comment type="catalytic activity">
    <reaction evidence="2">
        <text>dTMP + ATP = dTDP + ADP</text>
        <dbReference type="Rhea" id="RHEA:13517"/>
        <dbReference type="ChEBI" id="CHEBI:30616"/>
        <dbReference type="ChEBI" id="CHEBI:58369"/>
        <dbReference type="ChEBI" id="CHEBI:63528"/>
        <dbReference type="ChEBI" id="CHEBI:456216"/>
        <dbReference type="EC" id="2.7.4.9"/>
    </reaction>
</comment>
<comment type="biophysicochemical properties">
    <kinetics>
        <KM evidence="1">0.04 mM for ATP (at pH 7.4 and 30 degrees Celsius)</KM>
        <KM evidence="1">15 uM for dTMP (at pH 7.4 and 30 degrees Celsius)</KM>
        <Vmax evidence="1">50.0 umol/min/mg enzyme with ATP and dTMP as substrates (at pH 7.4 and 30 degrees Celsius)</Vmax>
    </kinetics>
</comment>
<comment type="pathway">
    <text>Pyrimidine metabolism; dTTP biosynthesis.</text>
</comment>
<comment type="subunit">
    <text>Homodimer.</text>
</comment>
<comment type="domain">
    <text>The LID domain is a solvent-exposed domain that closes over the site of phosphoryl transfer upon ATP binding.</text>
</comment>
<comment type="similarity">
    <text evidence="4">Belongs to the thymidylate kinase family.</text>
</comment>
<comment type="sequence caution" evidence="4">
    <conflict type="frameshift">
        <sequence resource="EMBL" id="L01483"/>
    </conflict>
</comment>
<gene>
    <name type="primary">tmk</name>
    <name type="synonym">ycfG</name>
    <name type="ordered locus">b1098</name>
    <name type="ordered locus">JW1084</name>
</gene>